<protein>
    <recommendedName>
        <fullName evidence="4">Small ribosomal subunit protein eS4B</fullName>
    </recommendedName>
    <alternativeName>
        <fullName>40S ribosomal protein S4-B</fullName>
    </alternativeName>
</protein>
<sequence>MVRGPKKHLKRVAAPHHWLLDKLSGTYAPKPSPGPHKARECLPLIVFLRNRLKYALNGREVKAILMQRLIQVDGKVRTDSTFPTGFMDVISVEKTGEHFRLVYDIKGRFTVHRITAEEAKYKLCKVKRVQLGAKGVPFLVTHDGRTIRYPDPLIKVNDTIKLNLETNKIESFIKFDTSAQVMVTGGRNMGRVGTIVHREHHLGSFEIIHVKDALDREFATRLSNVFVIGEAGKSWISLPKGKGVKLSITEERDRRRALKGLA</sequence>
<keyword id="KW-0963">Cytoplasm</keyword>
<keyword id="KW-0539">Nucleus</keyword>
<keyword id="KW-0597">Phosphoprotein</keyword>
<keyword id="KW-1185">Reference proteome</keyword>
<keyword id="KW-0687">Ribonucleoprotein</keyword>
<keyword id="KW-0689">Ribosomal protein</keyword>
<keyword id="KW-0694">RNA-binding</keyword>
<keyword id="KW-0699">rRNA-binding</keyword>
<name>RS4B_SCHPO</name>
<reference key="1">
    <citation type="journal article" date="2002" name="Nature">
        <title>The genome sequence of Schizosaccharomyces pombe.</title>
        <authorList>
            <person name="Wood V."/>
            <person name="Gwilliam R."/>
            <person name="Rajandream M.A."/>
            <person name="Lyne M.H."/>
            <person name="Lyne R."/>
            <person name="Stewart A."/>
            <person name="Sgouros J.G."/>
            <person name="Peat N."/>
            <person name="Hayles J."/>
            <person name="Baker S.G."/>
            <person name="Basham D."/>
            <person name="Bowman S."/>
            <person name="Brooks K."/>
            <person name="Brown D."/>
            <person name="Brown S."/>
            <person name="Chillingworth T."/>
            <person name="Churcher C.M."/>
            <person name="Collins M."/>
            <person name="Connor R."/>
            <person name="Cronin A."/>
            <person name="Davis P."/>
            <person name="Feltwell T."/>
            <person name="Fraser A."/>
            <person name="Gentles S."/>
            <person name="Goble A."/>
            <person name="Hamlin N."/>
            <person name="Harris D.E."/>
            <person name="Hidalgo J."/>
            <person name="Hodgson G."/>
            <person name="Holroyd S."/>
            <person name="Hornsby T."/>
            <person name="Howarth S."/>
            <person name="Huckle E.J."/>
            <person name="Hunt S."/>
            <person name="Jagels K."/>
            <person name="James K.D."/>
            <person name="Jones L."/>
            <person name="Jones M."/>
            <person name="Leather S."/>
            <person name="McDonald S."/>
            <person name="McLean J."/>
            <person name="Mooney P."/>
            <person name="Moule S."/>
            <person name="Mungall K.L."/>
            <person name="Murphy L.D."/>
            <person name="Niblett D."/>
            <person name="Odell C."/>
            <person name="Oliver K."/>
            <person name="O'Neil S."/>
            <person name="Pearson D."/>
            <person name="Quail M.A."/>
            <person name="Rabbinowitsch E."/>
            <person name="Rutherford K.M."/>
            <person name="Rutter S."/>
            <person name="Saunders D."/>
            <person name="Seeger K."/>
            <person name="Sharp S."/>
            <person name="Skelton J."/>
            <person name="Simmonds M.N."/>
            <person name="Squares R."/>
            <person name="Squares S."/>
            <person name="Stevens K."/>
            <person name="Taylor K."/>
            <person name="Taylor R.G."/>
            <person name="Tivey A."/>
            <person name="Walsh S.V."/>
            <person name="Warren T."/>
            <person name="Whitehead S."/>
            <person name="Woodward J.R."/>
            <person name="Volckaert G."/>
            <person name="Aert R."/>
            <person name="Robben J."/>
            <person name="Grymonprez B."/>
            <person name="Weltjens I."/>
            <person name="Vanstreels E."/>
            <person name="Rieger M."/>
            <person name="Schaefer M."/>
            <person name="Mueller-Auer S."/>
            <person name="Gabel C."/>
            <person name="Fuchs M."/>
            <person name="Duesterhoeft A."/>
            <person name="Fritzc C."/>
            <person name="Holzer E."/>
            <person name="Moestl D."/>
            <person name="Hilbert H."/>
            <person name="Borzym K."/>
            <person name="Langer I."/>
            <person name="Beck A."/>
            <person name="Lehrach H."/>
            <person name="Reinhardt R."/>
            <person name="Pohl T.M."/>
            <person name="Eger P."/>
            <person name="Zimmermann W."/>
            <person name="Wedler H."/>
            <person name="Wambutt R."/>
            <person name="Purnelle B."/>
            <person name="Goffeau A."/>
            <person name="Cadieu E."/>
            <person name="Dreano S."/>
            <person name="Gloux S."/>
            <person name="Lelaure V."/>
            <person name="Mottier S."/>
            <person name="Galibert F."/>
            <person name="Aves S.J."/>
            <person name="Xiang Z."/>
            <person name="Hunt C."/>
            <person name="Moore K."/>
            <person name="Hurst S.M."/>
            <person name="Lucas M."/>
            <person name="Rochet M."/>
            <person name="Gaillardin C."/>
            <person name="Tallada V.A."/>
            <person name="Garzon A."/>
            <person name="Thode G."/>
            <person name="Daga R.R."/>
            <person name="Cruzado L."/>
            <person name="Jimenez J."/>
            <person name="Sanchez M."/>
            <person name="del Rey F."/>
            <person name="Benito J."/>
            <person name="Dominguez A."/>
            <person name="Revuelta J.L."/>
            <person name="Moreno S."/>
            <person name="Armstrong J."/>
            <person name="Forsburg S.L."/>
            <person name="Cerutti L."/>
            <person name="Lowe T."/>
            <person name="McCombie W.R."/>
            <person name="Paulsen I."/>
            <person name="Potashkin J."/>
            <person name="Shpakovski G.V."/>
            <person name="Ussery D."/>
            <person name="Barrell B.G."/>
            <person name="Nurse P."/>
        </authorList>
    </citation>
    <scope>NUCLEOTIDE SEQUENCE [LARGE SCALE GENOMIC DNA]</scope>
    <source>
        <strain>972 / ATCC 24843</strain>
    </source>
</reference>
<reference key="2">
    <citation type="journal article" date="2006" name="Nat. Biotechnol.">
        <title>ORFeome cloning and global analysis of protein localization in the fission yeast Schizosaccharomyces pombe.</title>
        <authorList>
            <person name="Matsuyama A."/>
            <person name="Arai R."/>
            <person name="Yashiroda Y."/>
            <person name="Shirai A."/>
            <person name="Kamata A."/>
            <person name="Sekido S."/>
            <person name="Kobayashi Y."/>
            <person name="Hashimoto A."/>
            <person name="Hamamoto M."/>
            <person name="Hiraoka Y."/>
            <person name="Horinouchi S."/>
            <person name="Yoshida M."/>
        </authorList>
    </citation>
    <scope>SUBCELLULAR LOCATION [LARGE SCALE ANALYSIS]</scope>
</reference>
<reference key="3">
    <citation type="journal article" date="2008" name="J. Proteome Res.">
        <title>Phosphoproteome analysis of fission yeast.</title>
        <authorList>
            <person name="Wilson-Grady J.T."/>
            <person name="Villen J."/>
            <person name="Gygi S.P."/>
        </authorList>
    </citation>
    <scope>PHOSPHORYLATION [LARGE SCALE ANALYSIS] AT SER-223</scope>
    <scope>IDENTIFICATION BY MASS SPECTROMETRY</scope>
</reference>
<gene>
    <name type="primary">rps402</name>
    <name type="synonym">rps4b</name>
    <name type="ORF">SPBC21B10.10</name>
</gene>
<feature type="chain" id="PRO_0000130840" description="Small ribosomal subunit protein eS4B">
    <location>
        <begin position="1"/>
        <end position="262"/>
    </location>
</feature>
<feature type="domain" description="S4 RNA-binding">
    <location>
        <begin position="42"/>
        <end position="105"/>
    </location>
</feature>
<feature type="modified residue" description="Phosphoserine" evidence="3">
    <location>
        <position position="223"/>
    </location>
</feature>
<comment type="function">
    <text evidence="1">Component of the ribosome, a large ribonucleoprotein complex responsible for the synthesis of proteins in the cell. The small ribosomal subunit (SSU) binds messenger RNAs (mRNAs) and translates the encoded message by selecting cognate aminoacyl-transfer RNA (tRNA) molecules. The large subunit (LSU) contains the ribosomal catalytic site termed the peptidyl transferase center (PTC), which catalyzes the formation of peptide bonds, thereby polymerizing the amino acids delivered by tRNAs into a polypeptide chain. The nascent polypeptides leave the ribosome through a tunnel in the LSU and interact with protein factors that function in enzymatic processing, targeting, and the membrane insertion of nascent chains at the exit of the ribosomal tunnel.</text>
</comment>
<comment type="subunit">
    <text evidence="1">Component of the small ribosomal subunit (SSU). Mature yeast ribosomes consist of a small (40S) and a large (60S) subunit. The 40S small subunit contains 1 molecule of ribosomal RNA (18S rRNA) and at least 33 different proteins. The large 60S subunit contains 3 rRNA molecules (25S, 5.8S and 5S rRNA) and at least 46 different proteins.</text>
</comment>
<comment type="subcellular location">
    <subcellularLocation>
        <location evidence="2">Cytoplasm</location>
    </subcellularLocation>
    <subcellularLocation>
        <location evidence="2">Nucleus</location>
        <location evidence="2">Nucleolus</location>
    </subcellularLocation>
</comment>
<comment type="miscellaneous">
    <text>There are 3 genes for eS4 in S.pombe.</text>
</comment>
<comment type="similarity">
    <text evidence="4">Belongs to the eukaryotic ribosomal protein eS4 family.</text>
</comment>
<proteinExistence type="evidence at protein level"/>
<dbReference type="EMBL" id="CU329671">
    <property type="protein sequence ID" value="CAB57920.1"/>
    <property type="molecule type" value="Genomic_DNA"/>
</dbReference>
<dbReference type="PIR" id="T39917">
    <property type="entry name" value="T39917"/>
</dbReference>
<dbReference type="RefSeq" id="NP_595677.1">
    <property type="nucleotide sequence ID" value="NM_001021572.2"/>
</dbReference>
<dbReference type="SMR" id="Q9USW5"/>
<dbReference type="BioGRID" id="276855">
    <property type="interactions" value="33"/>
</dbReference>
<dbReference type="FunCoup" id="Q9USW5">
    <property type="interactions" value="444"/>
</dbReference>
<dbReference type="STRING" id="284812.Q9USW5"/>
<dbReference type="iPTMnet" id="Q9USW5"/>
<dbReference type="PaxDb" id="4896-SPBC21B10.10.1"/>
<dbReference type="EnsemblFungi" id="SPBC21B10.10.1">
    <property type="protein sequence ID" value="SPBC21B10.10.1:pep"/>
    <property type="gene ID" value="SPBC21B10.10"/>
</dbReference>
<dbReference type="GeneID" id="2540325"/>
<dbReference type="KEGG" id="spo:2540325"/>
<dbReference type="PomBase" id="SPBC21B10.10">
    <property type="gene designation" value="rps402"/>
</dbReference>
<dbReference type="VEuPathDB" id="FungiDB:SPBC21B10.10"/>
<dbReference type="eggNOG" id="KOG0378">
    <property type="taxonomic scope" value="Eukaryota"/>
</dbReference>
<dbReference type="HOGENOM" id="CLU_060400_1_0_1"/>
<dbReference type="InParanoid" id="Q9USW5"/>
<dbReference type="OMA" id="CIVTIRD"/>
<dbReference type="PhylomeDB" id="Q9USW5"/>
<dbReference type="Reactome" id="R-SPO-156827">
    <property type="pathway name" value="L13a-mediated translational silencing of Ceruloplasmin expression"/>
</dbReference>
<dbReference type="Reactome" id="R-SPO-1799339">
    <property type="pathway name" value="SRP-dependent cotranslational protein targeting to membrane"/>
</dbReference>
<dbReference type="Reactome" id="R-SPO-72649">
    <property type="pathway name" value="Translation initiation complex formation"/>
</dbReference>
<dbReference type="Reactome" id="R-SPO-72689">
    <property type="pathway name" value="Formation of a pool of free 40S subunits"/>
</dbReference>
<dbReference type="Reactome" id="R-SPO-72695">
    <property type="pathway name" value="Formation of the ternary complex, and subsequently, the 43S complex"/>
</dbReference>
<dbReference type="Reactome" id="R-SPO-72702">
    <property type="pathway name" value="Ribosomal scanning and start codon recognition"/>
</dbReference>
<dbReference type="Reactome" id="R-SPO-72706">
    <property type="pathway name" value="GTP hydrolysis and joining of the 60S ribosomal subunit"/>
</dbReference>
<dbReference type="Reactome" id="R-SPO-975956">
    <property type="pathway name" value="Nonsense Mediated Decay (NMD) independent of the Exon Junction Complex (EJC)"/>
</dbReference>
<dbReference type="Reactome" id="R-SPO-975957">
    <property type="pathway name" value="Nonsense Mediated Decay (NMD) enhanced by the Exon Junction Complex (EJC)"/>
</dbReference>
<dbReference type="PRO" id="PR:Q9USW5"/>
<dbReference type="Proteomes" id="UP000002485">
    <property type="component" value="Chromosome II"/>
</dbReference>
<dbReference type="GO" id="GO:0005829">
    <property type="term" value="C:cytosol"/>
    <property type="evidence" value="ECO:0007005"/>
    <property type="project" value="PomBase"/>
</dbReference>
<dbReference type="GO" id="GO:0022627">
    <property type="term" value="C:cytosolic small ribosomal subunit"/>
    <property type="evidence" value="ECO:0000318"/>
    <property type="project" value="GO_Central"/>
</dbReference>
<dbReference type="GO" id="GO:0005730">
    <property type="term" value="C:nucleolus"/>
    <property type="evidence" value="ECO:0007005"/>
    <property type="project" value="PomBase"/>
</dbReference>
<dbReference type="GO" id="GO:0003723">
    <property type="term" value="F:RNA binding"/>
    <property type="evidence" value="ECO:0000318"/>
    <property type="project" value="GO_Central"/>
</dbReference>
<dbReference type="GO" id="GO:0019843">
    <property type="term" value="F:rRNA binding"/>
    <property type="evidence" value="ECO:0007669"/>
    <property type="project" value="UniProtKB-KW"/>
</dbReference>
<dbReference type="GO" id="GO:0003735">
    <property type="term" value="F:structural constituent of ribosome"/>
    <property type="evidence" value="ECO:0000318"/>
    <property type="project" value="GO_Central"/>
</dbReference>
<dbReference type="GO" id="GO:0002181">
    <property type="term" value="P:cytoplasmic translation"/>
    <property type="evidence" value="ECO:0000266"/>
    <property type="project" value="PomBase"/>
</dbReference>
<dbReference type="GO" id="GO:0006412">
    <property type="term" value="P:translation"/>
    <property type="evidence" value="ECO:0000318"/>
    <property type="project" value="GO_Central"/>
</dbReference>
<dbReference type="CDD" id="cd06087">
    <property type="entry name" value="KOW_RPS4"/>
    <property type="match status" value="1"/>
</dbReference>
<dbReference type="CDD" id="cd00165">
    <property type="entry name" value="S4"/>
    <property type="match status" value="1"/>
</dbReference>
<dbReference type="FunFam" id="2.30.30.30:FF:000005">
    <property type="entry name" value="40S ribosomal protein S4"/>
    <property type="match status" value="1"/>
</dbReference>
<dbReference type="FunFam" id="2.40.50.740:FF:000001">
    <property type="entry name" value="40S ribosomal protein S4"/>
    <property type="match status" value="1"/>
</dbReference>
<dbReference type="FunFam" id="3.10.290.10:FF:000051">
    <property type="entry name" value="40S ribosomal protein S4, X isoform"/>
    <property type="match status" value="1"/>
</dbReference>
<dbReference type="Gene3D" id="2.30.30.30">
    <property type="match status" value="1"/>
</dbReference>
<dbReference type="Gene3D" id="2.40.50.740">
    <property type="match status" value="1"/>
</dbReference>
<dbReference type="Gene3D" id="3.10.290.10">
    <property type="entry name" value="RNA-binding S4 domain"/>
    <property type="match status" value="1"/>
</dbReference>
<dbReference type="HAMAP" id="MF_00485">
    <property type="entry name" value="Ribosomal_eS4"/>
    <property type="match status" value="1"/>
</dbReference>
<dbReference type="InterPro" id="IPR005824">
    <property type="entry name" value="KOW"/>
</dbReference>
<dbReference type="InterPro" id="IPR014722">
    <property type="entry name" value="Rib_uL2_dom2"/>
</dbReference>
<dbReference type="InterPro" id="IPR000876">
    <property type="entry name" value="Ribosomal_eS4"/>
</dbReference>
<dbReference type="InterPro" id="IPR032277">
    <property type="entry name" value="Ribosomal_eS4_C"/>
</dbReference>
<dbReference type="InterPro" id="IPR013845">
    <property type="entry name" value="Ribosomal_eS4_central_region"/>
</dbReference>
<dbReference type="InterPro" id="IPR038237">
    <property type="entry name" value="Ribosomal_eS4_central_sf"/>
</dbReference>
<dbReference type="InterPro" id="IPR041982">
    <property type="entry name" value="Ribosomal_eS4_KOW"/>
</dbReference>
<dbReference type="InterPro" id="IPR013843">
    <property type="entry name" value="Ribosomal_eS4_N"/>
</dbReference>
<dbReference type="InterPro" id="IPR018199">
    <property type="entry name" value="Ribosomal_eS4_N_CS"/>
</dbReference>
<dbReference type="InterPro" id="IPR002942">
    <property type="entry name" value="S4_RNA-bd"/>
</dbReference>
<dbReference type="InterPro" id="IPR036986">
    <property type="entry name" value="S4_RNA-bd_sf"/>
</dbReference>
<dbReference type="PANTHER" id="PTHR11581">
    <property type="entry name" value="30S/40S RIBOSOMAL PROTEIN S4"/>
    <property type="match status" value="1"/>
</dbReference>
<dbReference type="PANTHER" id="PTHR11581:SF0">
    <property type="entry name" value="SMALL RIBOSOMAL SUBUNIT PROTEIN ES4"/>
    <property type="match status" value="1"/>
</dbReference>
<dbReference type="Pfam" id="PF16121">
    <property type="entry name" value="40S_S4_C"/>
    <property type="match status" value="1"/>
</dbReference>
<dbReference type="Pfam" id="PF00467">
    <property type="entry name" value="KOW"/>
    <property type="match status" value="1"/>
</dbReference>
<dbReference type="Pfam" id="PF00900">
    <property type="entry name" value="Ribosomal_S4e"/>
    <property type="match status" value="1"/>
</dbReference>
<dbReference type="Pfam" id="PF08071">
    <property type="entry name" value="RS4NT"/>
    <property type="match status" value="1"/>
</dbReference>
<dbReference type="PIRSF" id="PIRSF002116">
    <property type="entry name" value="Ribosomal_S4"/>
    <property type="match status" value="1"/>
</dbReference>
<dbReference type="SMART" id="SM00363">
    <property type="entry name" value="S4"/>
    <property type="match status" value="1"/>
</dbReference>
<dbReference type="PROSITE" id="PS00528">
    <property type="entry name" value="RIBOSOMAL_S4E"/>
    <property type="match status" value="1"/>
</dbReference>
<dbReference type="PROSITE" id="PS50889">
    <property type="entry name" value="S4"/>
    <property type="match status" value="1"/>
</dbReference>
<organism>
    <name type="scientific">Schizosaccharomyces pombe (strain 972 / ATCC 24843)</name>
    <name type="common">Fission yeast</name>
    <dbReference type="NCBI Taxonomy" id="284812"/>
    <lineage>
        <taxon>Eukaryota</taxon>
        <taxon>Fungi</taxon>
        <taxon>Dikarya</taxon>
        <taxon>Ascomycota</taxon>
        <taxon>Taphrinomycotina</taxon>
        <taxon>Schizosaccharomycetes</taxon>
        <taxon>Schizosaccharomycetales</taxon>
        <taxon>Schizosaccharomycetaceae</taxon>
        <taxon>Schizosaccharomyces</taxon>
    </lineage>
</organism>
<accession>Q9USW5</accession>
<evidence type="ECO:0000250" key="1">
    <source>
        <dbReference type="UniProtKB" id="P0CX36"/>
    </source>
</evidence>
<evidence type="ECO:0000269" key="2">
    <source>
    </source>
</evidence>
<evidence type="ECO:0000269" key="3">
    <source>
    </source>
</evidence>
<evidence type="ECO:0000305" key="4"/>